<proteinExistence type="inferred from homology"/>
<protein>
    <recommendedName>
        <fullName evidence="1">UvrABC system protein B</fullName>
        <shortName evidence="1">Protein UvrB</shortName>
    </recommendedName>
    <alternativeName>
        <fullName evidence="1">Excinuclease ABC subunit B</fullName>
    </alternativeName>
</protein>
<comment type="function">
    <text evidence="1">The UvrABC repair system catalyzes the recognition and processing of DNA lesions. A damage recognition complex composed of 2 UvrA and 2 UvrB subunits scans DNA for abnormalities. Upon binding of the UvrA(2)B(2) complex to a putative damaged site, the DNA wraps around one UvrB monomer. DNA wrap is dependent on ATP binding by UvrB and probably causes local melting of the DNA helix, facilitating insertion of UvrB beta-hairpin between the DNA strands. Then UvrB probes one DNA strand for the presence of a lesion. If a lesion is found the UvrA subunits dissociate and the UvrB-DNA preincision complex is formed. This complex is subsequently bound by UvrC and the second UvrB is released. If no lesion is found, the DNA wraps around the other UvrB subunit that will check the other stand for damage.</text>
</comment>
<comment type="subunit">
    <text evidence="1">Forms a heterotetramer with UvrA during the search for lesions. Interacts with UvrC in an incision complex.</text>
</comment>
<comment type="subcellular location">
    <subcellularLocation>
        <location evidence="1">Cytoplasm</location>
    </subcellularLocation>
</comment>
<comment type="domain">
    <text evidence="1">The beta-hairpin motif is involved in DNA binding.</text>
</comment>
<comment type="similarity">
    <text evidence="1">Belongs to the UvrB family.</text>
</comment>
<reference key="1">
    <citation type="submission" date="2009-01" db="EMBL/GenBank/DDBJ databases">
        <title>Complete sequence of chromosome of Caldicellulosiruptor becscii DSM 6725.</title>
        <authorList>
            <person name="Lucas S."/>
            <person name="Copeland A."/>
            <person name="Lapidus A."/>
            <person name="Glavina del Rio T."/>
            <person name="Tice H."/>
            <person name="Bruce D."/>
            <person name="Goodwin L."/>
            <person name="Pitluck S."/>
            <person name="Sims D."/>
            <person name="Meincke L."/>
            <person name="Brettin T."/>
            <person name="Detter J.C."/>
            <person name="Han C."/>
            <person name="Larimer F."/>
            <person name="Land M."/>
            <person name="Hauser L."/>
            <person name="Kyrpides N."/>
            <person name="Ovchinnikova G."/>
            <person name="Kataeva I."/>
            <person name="Adams M.W.W."/>
        </authorList>
    </citation>
    <scope>NUCLEOTIDE SEQUENCE [LARGE SCALE GENOMIC DNA]</scope>
    <source>
        <strain>ATCC BAA-1888 / DSM 6725 / KCTC 15123 / Z-1320</strain>
    </source>
</reference>
<dbReference type="EMBL" id="CP001393">
    <property type="protein sequence ID" value="ACM60536.1"/>
    <property type="molecule type" value="Genomic_DNA"/>
</dbReference>
<dbReference type="RefSeq" id="WP_013430244.1">
    <property type="nucleotide sequence ID" value="NC_012034.1"/>
</dbReference>
<dbReference type="SMR" id="B9MS82"/>
<dbReference type="STRING" id="521460.Athe_1438"/>
<dbReference type="GeneID" id="31772783"/>
<dbReference type="KEGG" id="ate:Athe_1438"/>
<dbReference type="eggNOG" id="COG0556">
    <property type="taxonomic scope" value="Bacteria"/>
</dbReference>
<dbReference type="HOGENOM" id="CLU_009621_2_1_9"/>
<dbReference type="Proteomes" id="UP000007723">
    <property type="component" value="Chromosome"/>
</dbReference>
<dbReference type="GO" id="GO:0005737">
    <property type="term" value="C:cytoplasm"/>
    <property type="evidence" value="ECO:0007669"/>
    <property type="project" value="UniProtKB-SubCell"/>
</dbReference>
<dbReference type="GO" id="GO:0009380">
    <property type="term" value="C:excinuclease repair complex"/>
    <property type="evidence" value="ECO:0007669"/>
    <property type="project" value="InterPro"/>
</dbReference>
<dbReference type="GO" id="GO:0005524">
    <property type="term" value="F:ATP binding"/>
    <property type="evidence" value="ECO:0007669"/>
    <property type="project" value="UniProtKB-UniRule"/>
</dbReference>
<dbReference type="GO" id="GO:0016887">
    <property type="term" value="F:ATP hydrolysis activity"/>
    <property type="evidence" value="ECO:0007669"/>
    <property type="project" value="InterPro"/>
</dbReference>
<dbReference type="GO" id="GO:0003677">
    <property type="term" value="F:DNA binding"/>
    <property type="evidence" value="ECO:0007669"/>
    <property type="project" value="UniProtKB-UniRule"/>
</dbReference>
<dbReference type="GO" id="GO:0009381">
    <property type="term" value="F:excinuclease ABC activity"/>
    <property type="evidence" value="ECO:0007669"/>
    <property type="project" value="UniProtKB-UniRule"/>
</dbReference>
<dbReference type="GO" id="GO:0004386">
    <property type="term" value="F:helicase activity"/>
    <property type="evidence" value="ECO:0007669"/>
    <property type="project" value="UniProtKB-KW"/>
</dbReference>
<dbReference type="GO" id="GO:0006289">
    <property type="term" value="P:nucleotide-excision repair"/>
    <property type="evidence" value="ECO:0007669"/>
    <property type="project" value="UniProtKB-UniRule"/>
</dbReference>
<dbReference type="GO" id="GO:0009432">
    <property type="term" value="P:SOS response"/>
    <property type="evidence" value="ECO:0007669"/>
    <property type="project" value="UniProtKB-UniRule"/>
</dbReference>
<dbReference type="CDD" id="cd17916">
    <property type="entry name" value="DEXHc_UvrB"/>
    <property type="match status" value="1"/>
</dbReference>
<dbReference type="CDD" id="cd18790">
    <property type="entry name" value="SF2_C_UvrB"/>
    <property type="match status" value="1"/>
</dbReference>
<dbReference type="Gene3D" id="6.10.140.240">
    <property type="match status" value="1"/>
</dbReference>
<dbReference type="Gene3D" id="3.40.50.300">
    <property type="entry name" value="P-loop containing nucleotide triphosphate hydrolases"/>
    <property type="match status" value="3"/>
</dbReference>
<dbReference type="Gene3D" id="4.10.860.10">
    <property type="entry name" value="UVR domain"/>
    <property type="match status" value="1"/>
</dbReference>
<dbReference type="HAMAP" id="MF_00204">
    <property type="entry name" value="UvrB"/>
    <property type="match status" value="1"/>
</dbReference>
<dbReference type="InterPro" id="IPR006935">
    <property type="entry name" value="Helicase/UvrB_N"/>
</dbReference>
<dbReference type="InterPro" id="IPR014001">
    <property type="entry name" value="Helicase_ATP-bd"/>
</dbReference>
<dbReference type="InterPro" id="IPR001650">
    <property type="entry name" value="Helicase_C-like"/>
</dbReference>
<dbReference type="InterPro" id="IPR027417">
    <property type="entry name" value="P-loop_NTPase"/>
</dbReference>
<dbReference type="InterPro" id="IPR001943">
    <property type="entry name" value="UVR_dom"/>
</dbReference>
<dbReference type="InterPro" id="IPR036876">
    <property type="entry name" value="UVR_dom_sf"/>
</dbReference>
<dbReference type="InterPro" id="IPR004807">
    <property type="entry name" value="UvrB"/>
</dbReference>
<dbReference type="InterPro" id="IPR041471">
    <property type="entry name" value="UvrB_inter"/>
</dbReference>
<dbReference type="InterPro" id="IPR024759">
    <property type="entry name" value="UvrB_YAD/RRR_dom"/>
</dbReference>
<dbReference type="NCBIfam" id="NF003673">
    <property type="entry name" value="PRK05298.1"/>
    <property type="match status" value="1"/>
</dbReference>
<dbReference type="NCBIfam" id="TIGR00631">
    <property type="entry name" value="uvrb"/>
    <property type="match status" value="1"/>
</dbReference>
<dbReference type="PANTHER" id="PTHR24029">
    <property type="entry name" value="UVRABC SYSTEM PROTEIN B"/>
    <property type="match status" value="1"/>
</dbReference>
<dbReference type="PANTHER" id="PTHR24029:SF0">
    <property type="entry name" value="UVRABC SYSTEM PROTEIN B"/>
    <property type="match status" value="1"/>
</dbReference>
<dbReference type="Pfam" id="PF00271">
    <property type="entry name" value="Helicase_C"/>
    <property type="match status" value="1"/>
</dbReference>
<dbReference type="Pfam" id="PF04851">
    <property type="entry name" value="ResIII"/>
    <property type="match status" value="1"/>
</dbReference>
<dbReference type="Pfam" id="PF02151">
    <property type="entry name" value="UVR"/>
    <property type="match status" value="1"/>
</dbReference>
<dbReference type="Pfam" id="PF12344">
    <property type="entry name" value="UvrB"/>
    <property type="match status" value="1"/>
</dbReference>
<dbReference type="Pfam" id="PF17757">
    <property type="entry name" value="UvrB_inter"/>
    <property type="match status" value="1"/>
</dbReference>
<dbReference type="SMART" id="SM00487">
    <property type="entry name" value="DEXDc"/>
    <property type="match status" value="1"/>
</dbReference>
<dbReference type="SMART" id="SM00490">
    <property type="entry name" value="HELICc"/>
    <property type="match status" value="1"/>
</dbReference>
<dbReference type="SUPFAM" id="SSF46600">
    <property type="entry name" value="C-terminal UvrC-binding domain of UvrB"/>
    <property type="match status" value="1"/>
</dbReference>
<dbReference type="SUPFAM" id="SSF52540">
    <property type="entry name" value="P-loop containing nucleoside triphosphate hydrolases"/>
    <property type="match status" value="2"/>
</dbReference>
<dbReference type="PROSITE" id="PS51192">
    <property type="entry name" value="HELICASE_ATP_BIND_1"/>
    <property type="match status" value="1"/>
</dbReference>
<dbReference type="PROSITE" id="PS51194">
    <property type="entry name" value="HELICASE_CTER"/>
    <property type="match status" value="1"/>
</dbReference>
<dbReference type="PROSITE" id="PS50151">
    <property type="entry name" value="UVR"/>
    <property type="match status" value="1"/>
</dbReference>
<organism>
    <name type="scientific">Caldicellulosiruptor bescii (strain ATCC BAA-1888 / DSM 6725 / KCTC 15123 / Z-1320)</name>
    <name type="common">Anaerocellum thermophilum</name>
    <dbReference type="NCBI Taxonomy" id="521460"/>
    <lineage>
        <taxon>Bacteria</taxon>
        <taxon>Bacillati</taxon>
        <taxon>Bacillota</taxon>
        <taxon>Bacillota incertae sedis</taxon>
        <taxon>Caldicellulosiruptorales</taxon>
        <taxon>Caldicellulosiruptoraceae</taxon>
        <taxon>Caldicellulosiruptor</taxon>
    </lineage>
</organism>
<name>UVRB_CALBD</name>
<accession>B9MS82</accession>
<evidence type="ECO:0000255" key="1">
    <source>
        <dbReference type="HAMAP-Rule" id="MF_00204"/>
    </source>
</evidence>
<sequence length="661" mass="76557">MKKFKLVSDFKPTGDQPKAIEMLTEGILKGEKFQTLLGVTGSGKTFTMAKVIENVQRPTLVLAHNKTLAAQLCSEFREFFPENAVEFFVSYYDYYQPEAYIPETDTYIEKDSSINEEIDKLRHSATSALFERRDVIIVASVSCIYSLGSPEDYLNLTISLRPGMTKDRDEVIRDLIRMQYERNDIDFRRGRFRVRGDVLEVFPASNTDRAIRIEFFGDEIERITEFDVVTGEVIGRRNHVAIFPASHYVTTAEKLKRAIKSIEEELEQRLKELRSMGKLVEAQRLEQRTRYDIEMLQEMGFCKGIENYSRHLTGRPPGSPPYTLLDYFPNDFIMFIDESHVTIPQVRAMYNGDKARKDTLVEYGFRLPSAYDNRPLTFEEFEEKLNQVIFVSATPGPYELKKSSRIVEQIIRPTGLVDPEIEVHPVQGQIDHLIGEIRKRVEKNQRVLVTTLTKKMAESLTEYLKDVGIRVRYMHSDIDTIERMQIIRDLRLGKFDVLVGINLLREGLDLPEVSLVAILDADKEGFLRSETSLIQTIGRAARNVDGKVIMYADRITNAMQKAIDETNRRRKIQIEYNQKHGIVPQTVRKGIRQIIEATVSVAEEEEKYEVVEKEIVENMTKEEIEEYIKELEQEMKKLAIELEFEKAAKVRDKIFELKKLL</sequence>
<feature type="chain" id="PRO_1000200529" description="UvrABC system protein B">
    <location>
        <begin position="1"/>
        <end position="661"/>
    </location>
</feature>
<feature type="domain" description="Helicase ATP-binding" evidence="1">
    <location>
        <begin position="25"/>
        <end position="178"/>
    </location>
</feature>
<feature type="domain" description="Helicase C-terminal" evidence="1">
    <location>
        <begin position="429"/>
        <end position="591"/>
    </location>
</feature>
<feature type="domain" description="UVR" evidence="1">
    <location>
        <begin position="625"/>
        <end position="660"/>
    </location>
</feature>
<feature type="short sequence motif" description="Beta-hairpin">
    <location>
        <begin position="91"/>
        <end position="114"/>
    </location>
</feature>
<feature type="binding site" evidence="1">
    <location>
        <begin position="38"/>
        <end position="45"/>
    </location>
    <ligand>
        <name>ATP</name>
        <dbReference type="ChEBI" id="CHEBI:30616"/>
    </ligand>
</feature>
<gene>
    <name evidence="1" type="primary">uvrB</name>
    <name type="ordered locus">Athe_1438</name>
</gene>
<keyword id="KW-0067">ATP-binding</keyword>
<keyword id="KW-0963">Cytoplasm</keyword>
<keyword id="KW-0227">DNA damage</keyword>
<keyword id="KW-0228">DNA excision</keyword>
<keyword id="KW-0234">DNA repair</keyword>
<keyword id="KW-0267">Excision nuclease</keyword>
<keyword id="KW-0347">Helicase</keyword>
<keyword id="KW-0378">Hydrolase</keyword>
<keyword id="KW-0547">Nucleotide-binding</keyword>
<keyword id="KW-0742">SOS response</keyword>